<feature type="chain" id="PRO_0000435118" description="Helicase-like transcription factor CHR28">
    <location>
        <begin position="1"/>
        <end position="981"/>
    </location>
</feature>
<feature type="domain" description="Helicase ATP-binding" evidence="3">
    <location>
        <begin position="241"/>
        <end position="526"/>
    </location>
</feature>
<feature type="domain" description="Helicase C-terminal" evidence="4">
    <location>
        <begin position="804"/>
        <end position="976"/>
    </location>
</feature>
<feature type="zinc finger region" description="RING-type; degenerate" evidence="2">
    <location>
        <begin position="679"/>
        <end position="718"/>
    </location>
</feature>
<feature type="region of interest" description="Disordered" evidence="5">
    <location>
        <begin position="1"/>
        <end position="66"/>
    </location>
</feature>
<feature type="region of interest" description="Disordered" evidence="5">
    <location>
        <begin position="112"/>
        <end position="194"/>
    </location>
</feature>
<feature type="region of interest" description="Disordered" evidence="5">
    <location>
        <begin position="293"/>
        <end position="337"/>
    </location>
</feature>
<feature type="region of interest" description="Disordered" evidence="5">
    <location>
        <begin position="439"/>
        <end position="462"/>
    </location>
</feature>
<feature type="region of interest" description="Disordered" evidence="5">
    <location>
        <begin position="779"/>
        <end position="808"/>
    </location>
</feature>
<feature type="compositionally biased region" description="Polar residues" evidence="5">
    <location>
        <begin position="46"/>
        <end position="65"/>
    </location>
</feature>
<feature type="compositionally biased region" description="Pro residues" evidence="5">
    <location>
        <begin position="119"/>
        <end position="128"/>
    </location>
</feature>
<feature type="compositionally biased region" description="Polar residues" evidence="5">
    <location>
        <begin position="166"/>
        <end position="176"/>
    </location>
</feature>
<feature type="compositionally biased region" description="Basic and acidic residues" evidence="5">
    <location>
        <begin position="181"/>
        <end position="194"/>
    </location>
</feature>
<feature type="compositionally biased region" description="Basic residues" evidence="5">
    <location>
        <begin position="439"/>
        <end position="451"/>
    </location>
</feature>
<feature type="compositionally biased region" description="Polar residues" evidence="5">
    <location>
        <begin position="779"/>
        <end position="798"/>
    </location>
</feature>
<feature type="compositionally biased region" description="Acidic residues" evidence="5">
    <location>
        <begin position="799"/>
        <end position="808"/>
    </location>
</feature>
<feature type="binding site" evidence="3">
    <location>
        <begin position="254"/>
        <end position="261"/>
    </location>
    <ligand>
        <name>ATP</name>
        <dbReference type="ChEBI" id="CHEBI:30616"/>
    </ligand>
</feature>
<sequence>MDSAIDISSDSDVEIQETRTRPQHPPRIAEGSHRRDLSTLRPHFLSGSSSGANGHTKTGLTNLDSRNGFESKPLPRAEHHTHIPGNGSIVTSRIPNISVGDYEKFSSQQAFKRTHPPTFSRPPFPPRPDIGTSNGNASHFRGGAHDDLGMGRVTNGTRILPPSVAHGTSASPSHFNGLSDPMHRNGIGEERNSENDERLIYQAALQELNQPKSEVDLPAGLLSVPLMKHQKIALAWMFQKETNSLHCMGGILADDQGLGKTVSTIALILKQMHEAKLKSKNSGNQEAEALDLDADDESENAFEKPESKASNGSGVNGDSGIKKAKGEEASTSTRKFNRKRPAAGTLIVCPASVVRQWARELDEKVTDEAKLSVLIYHGGNRTKDPIELAKYDVVMTTYAIVSNEVPKQPLVDDDENDEKNSEKYGLASGFSINKKRKNVVGTTKKSKKKKGNNNAGDSSDPDSGTLAKVGWFRVVLDEAQTIKNHRTQVARACCGLRAKRRWCLSGTPIQNTIDDLYSYFRFLKYDPYAVYKSFCHQIKGPISRNSLQGYKKLQAVLRAIMLRRTKGTLLDGQPIINLPPKTINLSQVDFSVEERSFYVKLESDSRSQFKAYAAAGTLNQNYANILLMLLRLRQACDHPQLVKRYNSDSVGKVSEEAVKKLPKEDLVSLLSRLESSPICCVCHDPPEDPVVTLCGHIFCYQCVSDYITGDEDTCPAPRCREQLAHDVVFSKSTLRSCVADDLGCSSSEDNSHDKSVFQNGEFSSSKIKAVLDILQSLSNQGTSNSTQNGQMASSSQQPNDDDDDDDDDVTIVEKTSLKSTPSNGGPIKTIIFSQWTGMLDLVELSLIENSIEFRRLDGTMSLIARDRAVKEFSNDPDVKVMIMSLKAGNLGLNMIAACHVILLDLWWNPTTEDQAIDRAHRIGQTRPVTVTRITIKNTVEDRILALQEEKRKMVASAFGEDHGGSSATRLTVDDLKYLFMV</sequence>
<dbReference type="EC" id="3.6.4.-" evidence="10"/>
<dbReference type="EMBL" id="AC007980">
    <property type="protein sequence ID" value="AAD50036.1"/>
    <property type="status" value="ALT_SEQ"/>
    <property type="molecule type" value="Genomic_DNA"/>
</dbReference>
<dbReference type="EMBL" id="AC012561">
    <property type="protein sequence ID" value="AAF87890.1"/>
    <property type="status" value="ALT_SEQ"/>
    <property type="molecule type" value="Genomic_DNA"/>
</dbReference>
<dbReference type="EMBL" id="CP002684">
    <property type="protein sequence ID" value="AEE32545.1"/>
    <property type="molecule type" value="Genomic_DNA"/>
</dbReference>
<dbReference type="EMBL" id="CP002684">
    <property type="protein sequence ID" value="ANM61085.1"/>
    <property type="molecule type" value="Genomic_DNA"/>
</dbReference>
<dbReference type="EMBL" id="CP002684">
    <property type="protein sequence ID" value="ANM61086.1"/>
    <property type="molecule type" value="Genomic_DNA"/>
</dbReference>
<dbReference type="EMBL" id="AY039939">
    <property type="protein sequence ID" value="AAK64043.1"/>
    <property type="molecule type" value="mRNA"/>
</dbReference>
<dbReference type="EMBL" id="AY142669">
    <property type="protein sequence ID" value="AAN13207.1"/>
    <property type="molecule type" value="mRNA"/>
</dbReference>
<dbReference type="PIR" id="D96540">
    <property type="entry name" value="D96540"/>
</dbReference>
<dbReference type="RefSeq" id="NP_001323325.1">
    <property type="nucleotide sequence ID" value="NM_001333433.1"/>
</dbReference>
<dbReference type="RefSeq" id="NP_001323326.1">
    <property type="nucleotide sequence ID" value="NM_001333434.1"/>
</dbReference>
<dbReference type="RefSeq" id="NP_564568.1">
    <property type="nucleotide sequence ID" value="NM_103924.2"/>
</dbReference>
<dbReference type="SMR" id="Q94BR5"/>
<dbReference type="FunCoup" id="Q94BR5">
    <property type="interactions" value="958"/>
</dbReference>
<dbReference type="IntAct" id="Q94BR5">
    <property type="interactions" value="1"/>
</dbReference>
<dbReference type="STRING" id="3702.Q94BR5"/>
<dbReference type="iPTMnet" id="Q94BR5"/>
<dbReference type="PaxDb" id="3702-AT1G50410.1"/>
<dbReference type="ProteomicsDB" id="246786"/>
<dbReference type="EnsemblPlants" id="AT1G50410.1">
    <property type="protein sequence ID" value="AT1G50410.1"/>
    <property type="gene ID" value="AT1G50410"/>
</dbReference>
<dbReference type="EnsemblPlants" id="AT1G50410.2">
    <property type="protein sequence ID" value="AT1G50410.2"/>
    <property type="gene ID" value="AT1G50410"/>
</dbReference>
<dbReference type="EnsemblPlants" id="AT1G50410.3">
    <property type="protein sequence ID" value="AT1G50410.3"/>
    <property type="gene ID" value="AT1G50410"/>
</dbReference>
<dbReference type="GeneID" id="841463"/>
<dbReference type="Gramene" id="AT1G50410.1">
    <property type="protein sequence ID" value="AT1G50410.1"/>
    <property type="gene ID" value="AT1G50410"/>
</dbReference>
<dbReference type="Gramene" id="AT1G50410.2">
    <property type="protein sequence ID" value="AT1G50410.2"/>
    <property type="gene ID" value="AT1G50410"/>
</dbReference>
<dbReference type="Gramene" id="AT1G50410.3">
    <property type="protein sequence ID" value="AT1G50410.3"/>
    <property type="gene ID" value="AT1G50410"/>
</dbReference>
<dbReference type="KEGG" id="ath:AT1G50410"/>
<dbReference type="Araport" id="AT1G50410"/>
<dbReference type="TAIR" id="AT1G50410">
    <property type="gene designation" value="FRG2"/>
</dbReference>
<dbReference type="eggNOG" id="KOG1001">
    <property type="taxonomic scope" value="Eukaryota"/>
</dbReference>
<dbReference type="HOGENOM" id="CLU_000315_2_3_1"/>
<dbReference type="InParanoid" id="Q94BR5"/>
<dbReference type="OMA" id="CHPHLIN"/>
<dbReference type="PhylomeDB" id="Q94BR5"/>
<dbReference type="PRO" id="PR:Q94BR5"/>
<dbReference type="Proteomes" id="UP000006548">
    <property type="component" value="Chromosome 1"/>
</dbReference>
<dbReference type="ExpressionAtlas" id="Q94BR5">
    <property type="expression patterns" value="baseline and differential"/>
</dbReference>
<dbReference type="GO" id="GO:0005634">
    <property type="term" value="C:nucleus"/>
    <property type="evidence" value="ECO:0007669"/>
    <property type="project" value="UniProtKB-SubCell"/>
</dbReference>
<dbReference type="GO" id="GO:0005524">
    <property type="term" value="F:ATP binding"/>
    <property type="evidence" value="ECO:0007669"/>
    <property type="project" value="UniProtKB-KW"/>
</dbReference>
<dbReference type="GO" id="GO:0003677">
    <property type="term" value="F:DNA binding"/>
    <property type="evidence" value="ECO:0007669"/>
    <property type="project" value="UniProtKB-KW"/>
</dbReference>
<dbReference type="GO" id="GO:0004386">
    <property type="term" value="F:helicase activity"/>
    <property type="evidence" value="ECO:0007669"/>
    <property type="project" value="UniProtKB-KW"/>
</dbReference>
<dbReference type="GO" id="GO:0016787">
    <property type="term" value="F:hydrolase activity"/>
    <property type="evidence" value="ECO:0007669"/>
    <property type="project" value="UniProtKB-KW"/>
</dbReference>
<dbReference type="GO" id="GO:0008270">
    <property type="term" value="F:zinc ion binding"/>
    <property type="evidence" value="ECO:0007669"/>
    <property type="project" value="UniProtKB-KW"/>
</dbReference>
<dbReference type="GO" id="GO:0080188">
    <property type="term" value="P:gene silencing by siRNA-directed DNA methylation"/>
    <property type="evidence" value="ECO:0000315"/>
    <property type="project" value="UniProtKB"/>
</dbReference>
<dbReference type="CDD" id="cd18008">
    <property type="entry name" value="DEXDc_SHPRH-like"/>
    <property type="match status" value="1"/>
</dbReference>
<dbReference type="CDD" id="cd18793">
    <property type="entry name" value="SF2_C_SNF"/>
    <property type="match status" value="1"/>
</dbReference>
<dbReference type="FunFam" id="3.40.50.10810:FF:000068">
    <property type="entry name" value="SNF2 domain-containing protein / helicase domain-containing protein / zinc finger protein-like protein"/>
    <property type="match status" value="1"/>
</dbReference>
<dbReference type="FunFam" id="3.40.50.10810:FF:000071">
    <property type="entry name" value="SNF2 domain-containing protein / helicase domain-containing protein / zinc finger protein-like protein"/>
    <property type="match status" value="1"/>
</dbReference>
<dbReference type="Gene3D" id="3.40.50.300">
    <property type="entry name" value="P-loop containing nucleotide triphosphate hydrolases"/>
    <property type="match status" value="1"/>
</dbReference>
<dbReference type="Gene3D" id="3.40.50.10810">
    <property type="entry name" value="Tandem AAA-ATPase domain"/>
    <property type="match status" value="3"/>
</dbReference>
<dbReference type="Gene3D" id="3.30.40.10">
    <property type="entry name" value="Zinc/RING finger domain, C3HC4 (zinc finger)"/>
    <property type="match status" value="1"/>
</dbReference>
<dbReference type="InterPro" id="IPR014001">
    <property type="entry name" value="Helicase_ATP-bd"/>
</dbReference>
<dbReference type="InterPro" id="IPR001650">
    <property type="entry name" value="Helicase_C-like"/>
</dbReference>
<dbReference type="InterPro" id="IPR027417">
    <property type="entry name" value="P-loop_NTPase"/>
</dbReference>
<dbReference type="InterPro" id="IPR038718">
    <property type="entry name" value="SNF2-like_sf"/>
</dbReference>
<dbReference type="InterPro" id="IPR049730">
    <property type="entry name" value="SNF2/RAD54-like_C"/>
</dbReference>
<dbReference type="InterPro" id="IPR000330">
    <property type="entry name" value="SNF2_N"/>
</dbReference>
<dbReference type="InterPro" id="IPR050628">
    <property type="entry name" value="SNF2_RAD54_helicase_TF"/>
</dbReference>
<dbReference type="InterPro" id="IPR018957">
    <property type="entry name" value="Znf_C3HC4_RING-type"/>
</dbReference>
<dbReference type="InterPro" id="IPR001841">
    <property type="entry name" value="Znf_RING"/>
</dbReference>
<dbReference type="InterPro" id="IPR013083">
    <property type="entry name" value="Znf_RING/FYVE/PHD"/>
</dbReference>
<dbReference type="InterPro" id="IPR017907">
    <property type="entry name" value="Znf_RING_CS"/>
</dbReference>
<dbReference type="PANTHER" id="PTHR45626:SF24">
    <property type="entry name" value="HELICASE-LIKE TRANSCRIPTION FACTOR CHR28-RELATED"/>
    <property type="match status" value="1"/>
</dbReference>
<dbReference type="PANTHER" id="PTHR45626">
    <property type="entry name" value="TRANSCRIPTION TERMINATION FACTOR 2-RELATED"/>
    <property type="match status" value="1"/>
</dbReference>
<dbReference type="Pfam" id="PF00271">
    <property type="entry name" value="Helicase_C"/>
    <property type="match status" value="1"/>
</dbReference>
<dbReference type="Pfam" id="PF00176">
    <property type="entry name" value="SNF2-rel_dom"/>
    <property type="match status" value="1"/>
</dbReference>
<dbReference type="Pfam" id="PF00097">
    <property type="entry name" value="zf-C3HC4"/>
    <property type="match status" value="1"/>
</dbReference>
<dbReference type="SMART" id="SM00487">
    <property type="entry name" value="DEXDc"/>
    <property type="match status" value="1"/>
</dbReference>
<dbReference type="SMART" id="SM00490">
    <property type="entry name" value="HELICc"/>
    <property type="match status" value="1"/>
</dbReference>
<dbReference type="SMART" id="SM00184">
    <property type="entry name" value="RING"/>
    <property type="match status" value="1"/>
</dbReference>
<dbReference type="SUPFAM" id="SSF52540">
    <property type="entry name" value="P-loop containing nucleoside triphosphate hydrolases"/>
    <property type="match status" value="2"/>
</dbReference>
<dbReference type="SUPFAM" id="SSF57850">
    <property type="entry name" value="RING/U-box"/>
    <property type="match status" value="1"/>
</dbReference>
<dbReference type="PROSITE" id="PS51192">
    <property type="entry name" value="HELICASE_ATP_BIND_1"/>
    <property type="match status" value="1"/>
</dbReference>
<dbReference type="PROSITE" id="PS51194">
    <property type="entry name" value="HELICASE_CTER"/>
    <property type="match status" value="1"/>
</dbReference>
<dbReference type="PROSITE" id="PS00518">
    <property type="entry name" value="ZF_RING_1"/>
    <property type="match status" value="1"/>
</dbReference>
<dbReference type="PROSITE" id="PS50089">
    <property type="entry name" value="ZF_RING_2"/>
    <property type="match status" value="1"/>
</dbReference>
<reference key="1">
    <citation type="journal article" date="2000" name="Nature">
        <title>Sequence and analysis of chromosome 1 of the plant Arabidopsis thaliana.</title>
        <authorList>
            <person name="Theologis A."/>
            <person name="Ecker J.R."/>
            <person name="Palm C.J."/>
            <person name="Federspiel N.A."/>
            <person name="Kaul S."/>
            <person name="White O."/>
            <person name="Alonso J."/>
            <person name="Altafi H."/>
            <person name="Araujo R."/>
            <person name="Bowman C.L."/>
            <person name="Brooks S.Y."/>
            <person name="Buehler E."/>
            <person name="Chan A."/>
            <person name="Chao Q."/>
            <person name="Chen H."/>
            <person name="Cheuk R.F."/>
            <person name="Chin C.W."/>
            <person name="Chung M.K."/>
            <person name="Conn L."/>
            <person name="Conway A.B."/>
            <person name="Conway A.R."/>
            <person name="Creasy T.H."/>
            <person name="Dewar K."/>
            <person name="Dunn P."/>
            <person name="Etgu P."/>
            <person name="Feldblyum T.V."/>
            <person name="Feng J.-D."/>
            <person name="Fong B."/>
            <person name="Fujii C.Y."/>
            <person name="Gill J.E."/>
            <person name="Goldsmith A.D."/>
            <person name="Haas B."/>
            <person name="Hansen N.F."/>
            <person name="Hughes B."/>
            <person name="Huizar L."/>
            <person name="Hunter J.L."/>
            <person name="Jenkins J."/>
            <person name="Johnson-Hopson C."/>
            <person name="Khan S."/>
            <person name="Khaykin E."/>
            <person name="Kim C.J."/>
            <person name="Koo H.L."/>
            <person name="Kremenetskaia I."/>
            <person name="Kurtz D.B."/>
            <person name="Kwan A."/>
            <person name="Lam B."/>
            <person name="Langin-Hooper S."/>
            <person name="Lee A."/>
            <person name="Lee J.M."/>
            <person name="Lenz C.A."/>
            <person name="Li J.H."/>
            <person name="Li Y.-P."/>
            <person name="Lin X."/>
            <person name="Liu S.X."/>
            <person name="Liu Z.A."/>
            <person name="Luros J.S."/>
            <person name="Maiti R."/>
            <person name="Marziali A."/>
            <person name="Militscher J."/>
            <person name="Miranda M."/>
            <person name="Nguyen M."/>
            <person name="Nierman W.C."/>
            <person name="Osborne B.I."/>
            <person name="Pai G."/>
            <person name="Peterson J."/>
            <person name="Pham P.K."/>
            <person name="Rizzo M."/>
            <person name="Rooney T."/>
            <person name="Rowley D."/>
            <person name="Sakano H."/>
            <person name="Salzberg S.L."/>
            <person name="Schwartz J.R."/>
            <person name="Shinn P."/>
            <person name="Southwick A.M."/>
            <person name="Sun H."/>
            <person name="Tallon L.J."/>
            <person name="Tambunga G."/>
            <person name="Toriumi M.J."/>
            <person name="Town C.D."/>
            <person name="Utterback T."/>
            <person name="Van Aken S."/>
            <person name="Vaysberg M."/>
            <person name="Vysotskaia V.S."/>
            <person name="Walker M."/>
            <person name="Wu D."/>
            <person name="Yu G."/>
            <person name="Fraser C.M."/>
            <person name="Venter J.C."/>
            <person name="Davis R.W."/>
        </authorList>
    </citation>
    <scope>NUCLEOTIDE SEQUENCE [LARGE SCALE GENOMIC DNA]</scope>
    <source>
        <strain>cv. Columbia</strain>
    </source>
</reference>
<reference key="2">
    <citation type="journal article" date="2017" name="Plant J.">
        <title>Araport11: a complete reannotation of the Arabidopsis thaliana reference genome.</title>
        <authorList>
            <person name="Cheng C.Y."/>
            <person name="Krishnakumar V."/>
            <person name="Chan A.P."/>
            <person name="Thibaud-Nissen F."/>
            <person name="Schobel S."/>
            <person name="Town C.D."/>
        </authorList>
    </citation>
    <scope>GENOME REANNOTATION</scope>
    <source>
        <strain>cv. Columbia</strain>
    </source>
</reference>
<reference key="3">
    <citation type="journal article" date="2003" name="Science">
        <title>Empirical analysis of transcriptional activity in the Arabidopsis genome.</title>
        <authorList>
            <person name="Yamada K."/>
            <person name="Lim J."/>
            <person name="Dale J.M."/>
            <person name="Chen H."/>
            <person name="Shinn P."/>
            <person name="Palm C.J."/>
            <person name="Southwick A.M."/>
            <person name="Wu H.C."/>
            <person name="Kim C.J."/>
            <person name="Nguyen M."/>
            <person name="Pham P.K."/>
            <person name="Cheuk R.F."/>
            <person name="Karlin-Newmann G."/>
            <person name="Liu S.X."/>
            <person name="Lam B."/>
            <person name="Sakano H."/>
            <person name="Wu T."/>
            <person name="Yu G."/>
            <person name="Miranda M."/>
            <person name="Quach H.L."/>
            <person name="Tripp M."/>
            <person name="Chang C.H."/>
            <person name="Lee J.M."/>
            <person name="Toriumi M.J."/>
            <person name="Chan M.M."/>
            <person name="Tang C.C."/>
            <person name="Onodera C.S."/>
            <person name="Deng J.M."/>
            <person name="Akiyama K."/>
            <person name="Ansari Y."/>
            <person name="Arakawa T."/>
            <person name="Banh J."/>
            <person name="Banno F."/>
            <person name="Bowser L."/>
            <person name="Brooks S.Y."/>
            <person name="Carninci P."/>
            <person name="Chao Q."/>
            <person name="Choy N."/>
            <person name="Enju A."/>
            <person name="Goldsmith A.D."/>
            <person name="Gurjal M."/>
            <person name="Hansen N.F."/>
            <person name="Hayashizaki Y."/>
            <person name="Johnson-Hopson C."/>
            <person name="Hsuan V.W."/>
            <person name="Iida K."/>
            <person name="Karnes M."/>
            <person name="Khan S."/>
            <person name="Koesema E."/>
            <person name="Ishida J."/>
            <person name="Jiang P.X."/>
            <person name="Jones T."/>
            <person name="Kawai J."/>
            <person name="Kamiya A."/>
            <person name="Meyers C."/>
            <person name="Nakajima M."/>
            <person name="Narusaka M."/>
            <person name="Seki M."/>
            <person name="Sakurai T."/>
            <person name="Satou M."/>
            <person name="Tamse R."/>
            <person name="Vaysberg M."/>
            <person name="Wallender E.K."/>
            <person name="Wong C."/>
            <person name="Yamamura Y."/>
            <person name="Yuan S."/>
            <person name="Shinozaki K."/>
            <person name="Davis R.W."/>
            <person name="Theologis A."/>
            <person name="Ecker J.R."/>
        </authorList>
    </citation>
    <scope>NUCLEOTIDE SEQUENCE [LARGE SCALE MRNA]</scope>
    <source>
        <strain>cv. Columbia</strain>
    </source>
</reference>
<reference key="4">
    <citation type="journal article" date="2014" name="Cell Res.">
        <title>SUVR2 is involved in transcriptional gene silencing by associating with SNF2-related chromatin-remodeling proteins in Arabidopsis.</title>
        <authorList>
            <person name="Han Y.F."/>
            <person name="Dou K."/>
            <person name="Ma Z.Y."/>
            <person name="Zhang S.W."/>
            <person name="Huang H.W."/>
            <person name="Li L."/>
            <person name="Cai T."/>
            <person name="Chen S."/>
            <person name="Zhu J.K."/>
            <person name="He X.J."/>
        </authorList>
    </citation>
    <scope>IDENTIFICATION BY MASS SPECTROMETRY</scope>
    <scope>FUNCTION</scope>
    <scope>INTERACTION WITH SUVR2</scope>
</reference>
<reference key="5">
    <citation type="journal article" date="2014" name="Proc. Natl. Acad. Sci. U.S.A.">
        <title>SNF2 chromatin remodeler-family proteins FRG1 and -2 are required for RNA-directed DNA methylation.</title>
        <authorList>
            <person name="Groth M."/>
            <person name="Stroud H."/>
            <person name="Feng S."/>
            <person name="Greenberg M.V."/>
            <person name="Vashisht A.A."/>
            <person name="Wohlschlegel J.A."/>
            <person name="Jacobsen S.E."/>
            <person name="Ausin I."/>
        </authorList>
    </citation>
    <scope>FUNCTION</scope>
</reference>
<name>CHR28_ARATH</name>
<gene>
    <name evidence="8" type="primary">CHR28</name>
    <name evidence="8" type="synonym">FRG2</name>
    <name evidence="11" type="ordered locus">At1g50410</name>
    <name evidence="13" type="ORF">F11F12.23</name>
    <name evidence="12" type="ORF">F14I3.1</name>
</gene>
<keyword id="KW-0067">ATP-binding</keyword>
<keyword id="KW-0156">Chromatin regulator</keyword>
<keyword id="KW-0238">DNA-binding</keyword>
<keyword id="KW-0347">Helicase</keyword>
<keyword id="KW-0378">Hydrolase</keyword>
<keyword id="KW-0479">Metal-binding</keyword>
<keyword id="KW-0547">Nucleotide-binding</keyword>
<keyword id="KW-0539">Nucleus</keyword>
<keyword id="KW-1185">Reference proteome</keyword>
<keyword id="KW-0943">RNA-mediated gene silencing</keyword>
<keyword id="KW-0804">Transcription</keyword>
<keyword id="KW-0805">Transcription regulation</keyword>
<keyword id="KW-0862">Zinc</keyword>
<keyword id="KW-0863">Zinc-finger</keyword>
<accession>Q94BR5</accession>
<accession>Q9LPR7</accession>
<accession>Q9SX56</accession>
<evidence type="ECO:0000250" key="1">
    <source>
        <dbReference type="UniProtKB" id="Q9ZUL5"/>
    </source>
</evidence>
<evidence type="ECO:0000255" key="2">
    <source>
        <dbReference type="PROSITE-ProRule" id="PRU00175"/>
    </source>
</evidence>
<evidence type="ECO:0000255" key="3">
    <source>
        <dbReference type="PROSITE-ProRule" id="PRU00541"/>
    </source>
</evidence>
<evidence type="ECO:0000255" key="4">
    <source>
        <dbReference type="PROSITE-ProRule" id="PRU00542"/>
    </source>
</evidence>
<evidence type="ECO:0000256" key="5">
    <source>
        <dbReference type="SAM" id="MobiDB-lite"/>
    </source>
</evidence>
<evidence type="ECO:0000269" key="6">
    <source>
    </source>
</evidence>
<evidence type="ECO:0000269" key="7">
    <source>
    </source>
</evidence>
<evidence type="ECO:0000303" key="8">
    <source>
    </source>
</evidence>
<evidence type="ECO:0000303" key="9">
    <source>
    </source>
</evidence>
<evidence type="ECO:0000305" key="10"/>
<evidence type="ECO:0000312" key="11">
    <source>
        <dbReference type="Araport" id="AT1G50410"/>
    </source>
</evidence>
<evidence type="ECO:0000312" key="12">
    <source>
        <dbReference type="EMBL" id="AAD50036.1"/>
    </source>
</evidence>
<evidence type="ECO:0000312" key="13">
    <source>
        <dbReference type="EMBL" id="AAF87890.1"/>
    </source>
</evidence>
<comment type="function">
    <text evidence="6 7">Probable helicase-like transcription factor involved in transcriptional gene silencing. Associates with SUVR2 and contributes to transcriptional gene silencing at RNA-directed DNA methylation (RdDM) target loci but also at RdDM-independent target loci. May be involved in nucleosome positioning to form ordered nucleosome arrays on chromatin (PubMed:25420628). Associates with SUVR2 and functions redundantly with FRG1. Required for the efficient methylation of a broad range of RdDM target loci (PubMed:25425661).</text>
</comment>
<comment type="subunit">
    <text evidence="6">Interacts with SUVR2.</text>
</comment>
<comment type="subcellular location">
    <subcellularLocation>
        <location evidence="1">Nucleus</location>
    </subcellularLocation>
</comment>
<comment type="similarity">
    <text evidence="10">Belongs to the SNF2/RAD54 helicase family. RAD16 subfamily.</text>
</comment>
<comment type="sequence caution" evidence="10">
    <conflict type="erroneous gene model prediction">
        <sequence resource="EMBL-CDS" id="AAD50036"/>
    </conflict>
</comment>
<comment type="sequence caution" evidence="10">
    <conflict type="erroneous gene model prediction">
        <sequence resource="EMBL-CDS" id="AAF87890"/>
    </conflict>
</comment>
<protein>
    <recommendedName>
        <fullName evidence="10">Helicase-like transcription factor CHR28</fullName>
        <ecNumber evidence="10">3.6.4.-</ecNumber>
    </recommendedName>
    <alternativeName>
        <fullName evidence="10">Protein CHROMATIN REMODELING 28</fullName>
    </alternativeName>
    <alternativeName>
        <fullName evidence="9">Protein SNF2-RING-HELICASE-LIKE 2</fullName>
    </alternativeName>
</protein>
<proteinExistence type="evidence at protein level"/>
<organism>
    <name type="scientific">Arabidopsis thaliana</name>
    <name type="common">Mouse-ear cress</name>
    <dbReference type="NCBI Taxonomy" id="3702"/>
    <lineage>
        <taxon>Eukaryota</taxon>
        <taxon>Viridiplantae</taxon>
        <taxon>Streptophyta</taxon>
        <taxon>Embryophyta</taxon>
        <taxon>Tracheophyta</taxon>
        <taxon>Spermatophyta</taxon>
        <taxon>Magnoliopsida</taxon>
        <taxon>eudicotyledons</taxon>
        <taxon>Gunneridae</taxon>
        <taxon>Pentapetalae</taxon>
        <taxon>rosids</taxon>
        <taxon>malvids</taxon>
        <taxon>Brassicales</taxon>
        <taxon>Brassicaceae</taxon>
        <taxon>Camelineae</taxon>
        <taxon>Arabidopsis</taxon>
    </lineage>
</organism>